<evidence type="ECO:0000255" key="1">
    <source>
        <dbReference type="HAMAP-Rule" id="MF_00909"/>
    </source>
</evidence>
<evidence type="ECO:0000256" key="2">
    <source>
        <dbReference type="SAM" id="MobiDB-lite"/>
    </source>
</evidence>
<feature type="chain" id="PRO_0000114378" description="Cell division protein FtsZ">
    <location>
        <begin position="1"/>
        <end position="386"/>
    </location>
</feature>
<feature type="region of interest" description="Disordered" evidence="2">
    <location>
        <begin position="350"/>
        <end position="377"/>
    </location>
</feature>
<feature type="binding site" evidence="1">
    <location>
        <begin position="20"/>
        <end position="24"/>
    </location>
    <ligand>
        <name>GTP</name>
        <dbReference type="ChEBI" id="CHEBI:37565"/>
    </ligand>
</feature>
<feature type="binding site" evidence="1">
    <location>
        <begin position="107"/>
        <end position="109"/>
    </location>
    <ligand>
        <name>GTP</name>
        <dbReference type="ChEBI" id="CHEBI:37565"/>
    </ligand>
</feature>
<feature type="binding site" evidence="1">
    <location>
        <position position="138"/>
    </location>
    <ligand>
        <name>GTP</name>
        <dbReference type="ChEBI" id="CHEBI:37565"/>
    </ligand>
</feature>
<feature type="binding site" evidence="1">
    <location>
        <position position="142"/>
    </location>
    <ligand>
        <name>GTP</name>
        <dbReference type="ChEBI" id="CHEBI:37565"/>
    </ligand>
</feature>
<feature type="binding site" evidence="1">
    <location>
        <position position="186"/>
    </location>
    <ligand>
        <name>GTP</name>
        <dbReference type="ChEBI" id="CHEBI:37565"/>
    </ligand>
</feature>
<protein>
    <recommendedName>
        <fullName evidence="1">Cell division protein FtsZ</fullName>
    </recommendedName>
</protein>
<keyword id="KW-0131">Cell cycle</keyword>
<keyword id="KW-0132">Cell division</keyword>
<keyword id="KW-0963">Cytoplasm</keyword>
<keyword id="KW-0342">GTP-binding</keyword>
<keyword id="KW-0547">Nucleotide-binding</keyword>
<keyword id="KW-0717">Septation</keyword>
<sequence>MFEPMELTNDAVIKVIGVGGGGGNAVEHMVRERIEGVDFFAVNTDAQALRKTAVGQTIQIGSGITKGLGAGANPEVGRHSAEEDREALRAALEGADMVFIAAGMGGGTGTGAAPVVAEVAKDQGILTVAVVAKPFNFEGKKRMAFAEQGIAELSKHVDSLITIPNDKLLKVLGRGISLLDAFGAANDVLKGAVQGIAELITRPGLMNVDFADVRTVMSEMGYAMMGSGVACGEDRAEEAAEMAISSPLLEDIDLSGARGVLVNITAGFDLRLDEFETVGNTIRAFASDNATVVIGTSLDPDMNDELRVTVVATGIGMDKRPEITLVTNKQSSQRVMDNLYRDHAAGMSSLNQEQKTAAKAVNEQNAQGSKEPDYLDIPAFLRKQAD</sequence>
<accession>Q9ALA4</accession>
<name>FTSZ_SODGL</name>
<organism>
    <name type="scientific">Sodalis glossinidius</name>
    <dbReference type="NCBI Taxonomy" id="63612"/>
    <lineage>
        <taxon>Bacteria</taxon>
        <taxon>Pseudomonadati</taxon>
        <taxon>Pseudomonadota</taxon>
        <taxon>Gammaproteobacteria</taxon>
        <taxon>Enterobacterales</taxon>
        <taxon>Bruguierivoracaceae</taxon>
        <taxon>Sodalis</taxon>
    </lineage>
</organism>
<gene>
    <name evidence="1" type="primary">ftsZ</name>
</gene>
<comment type="function">
    <text evidence="1">Essential cell division protein that forms a contractile ring structure (Z ring) at the future cell division site. The regulation of the ring assembly controls the timing and the location of cell division. One of the functions of the FtsZ ring is to recruit other cell division proteins to the septum to produce a new cell wall between the dividing cells. Binds GTP and shows GTPase activity.</text>
</comment>
<comment type="subunit">
    <text evidence="1">Homodimer. Polymerizes to form a dynamic ring structure in a strictly GTP-dependent manner. Interacts directly with several other division proteins.</text>
</comment>
<comment type="subcellular location">
    <subcellularLocation>
        <location evidence="1">Cytoplasm</location>
    </subcellularLocation>
    <text evidence="1">Assembles at midcell at the inner surface of the cytoplasmic membrane.</text>
</comment>
<comment type="similarity">
    <text evidence="1">Belongs to the FtsZ family.</text>
</comment>
<dbReference type="EMBL" id="AY024353">
    <property type="protein sequence ID" value="AAK07721.1"/>
    <property type="molecule type" value="Genomic_DNA"/>
</dbReference>
<dbReference type="SMR" id="Q9ALA4"/>
<dbReference type="GO" id="GO:0032153">
    <property type="term" value="C:cell division site"/>
    <property type="evidence" value="ECO:0007669"/>
    <property type="project" value="UniProtKB-UniRule"/>
</dbReference>
<dbReference type="GO" id="GO:0005737">
    <property type="term" value="C:cytoplasm"/>
    <property type="evidence" value="ECO:0007669"/>
    <property type="project" value="UniProtKB-SubCell"/>
</dbReference>
<dbReference type="GO" id="GO:0005525">
    <property type="term" value="F:GTP binding"/>
    <property type="evidence" value="ECO:0007669"/>
    <property type="project" value="UniProtKB-UniRule"/>
</dbReference>
<dbReference type="GO" id="GO:0003924">
    <property type="term" value="F:GTPase activity"/>
    <property type="evidence" value="ECO:0007669"/>
    <property type="project" value="UniProtKB-UniRule"/>
</dbReference>
<dbReference type="GO" id="GO:0000917">
    <property type="term" value="P:division septum assembly"/>
    <property type="evidence" value="ECO:0007669"/>
    <property type="project" value="UniProtKB-KW"/>
</dbReference>
<dbReference type="GO" id="GO:0043093">
    <property type="term" value="P:FtsZ-dependent cytokinesis"/>
    <property type="evidence" value="ECO:0007669"/>
    <property type="project" value="UniProtKB-UniRule"/>
</dbReference>
<dbReference type="GO" id="GO:0051258">
    <property type="term" value="P:protein polymerization"/>
    <property type="evidence" value="ECO:0007669"/>
    <property type="project" value="UniProtKB-UniRule"/>
</dbReference>
<dbReference type="CDD" id="cd02201">
    <property type="entry name" value="FtsZ_type1"/>
    <property type="match status" value="1"/>
</dbReference>
<dbReference type="FunFam" id="3.30.1330.20:FF:000004">
    <property type="entry name" value="Cell division protein FtsZ"/>
    <property type="match status" value="1"/>
</dbReference>
<dbReference type="FunFam" id="3.40.50.1440:FF:000023">
    <property type="entry name" value="Cell division protein FtsZ"/>
    <property type="match status" value="1"/>
</dbReference>
<dbReference type="Gene3D" id="3.30.1330.20">
    <property type="entry name" value="Tubulin/FtsZ, C-terminal domain"/>
    <property type="match status" value="1"/>
</dbReference>
<dbReference type="Gene3D" id="3.40.50.1440">
    <property type="entry name" value="Tubulin/FtsZ, GTPase domain"/>
    <property type="match status" value="1"/>
</dbReference>
<dbReference type="HAMAP" id="MF_00909">
    <property type="entry name" value="FtsZ"/>
    <property type="match status" value="1"/>
</dbReference>
<dbReference type="InterPro" id="IPR000158">
    <property type="entry name" value="Cell_div_FtsZ"/>
</dbReference>
<dbReference type="InterPro" id="IPR020805">
    <property type="entry name" value="Cell_div_FtsZ_CS"/>
</dbReference>
<dbReference type="InterPro" id="IPR045061">
    <property type="entry name" value="FtsZ/CetZ"/>
</dbReference>
<dbReference type="InterPro" id="IPR024757">
    <property type="entry name" value="FtsZ_C"/>
</dbReference>
<dbReference type="InterPro" id="IPR008280">
    <property type="entry name" value="Tub_FtsZ_C"/>
</dbReference>
<dbReference type="InterPro" id="IPR037103">
    <property type="entry name" value="Tubulin/FtsZ-like_C"/>
</dbReference>
<dbReference type="InterPro" id="IPR018316">
    <property type="entry name" value="Tubulin/FtsZ_2-layer-sand-dom"/>
</dbReference>
<dbReference type="InterPro" id="IPR036525">
    <property type="entry name" value="Tubulin/FtsZ_GTPase_sf"/>
</dbReference>
<dbReference type="InterPro" id="IPR003008">
    <property type="entry name" value="Tubulin_FtsZ_GTPase"/>
</dbReference>
<dbReference type="NCBIfam" id="TIGR00065">
    <property type="entry name" value="ftsZ"/>
    <property type="match status" value="1"/>
</dbReference>
<dbReference type="PANTHER" id="PTHR30314">
    <property type="entry name" value="CELL DIVISION PROTEIN FTSZ-RELATED"/>
    <property type="match status" value="1"/>
</dbReference>
<dbReference type="PANTHER" id="PTHR30314:SF3">
    <property type="entry name" value="MITOCHONDRIAL DIVISION PROTEIN FSZA"/>
    <property type="match status" value="1"/>
</dbReference>
<dbReference type="Pfam" id="PF12327">
    <property type="entry name" value="FtsZ_C"/>
    <property type="match status" value="1"/>
</dbReference>
<dbReference type="Pfam" id="PF00091">
    <property type="entry name" value="Tubulin"/>
    <property type="match status" value="1"/>
</dbReference>
<dbReference type="PRINTS" id="PR00423">
    <property type="entry name" value="CELLDVISFTSZ"/>
</dbReference>
<dbReference type="SMART" id="SM00864">
    <property type="entry name" value="Tubulin"/>
    <property type="match status" value="1"/>
</dbReference>
<dbReference type="SMART" id="SM00865">
    <property type="entry name" value="Tubulin_C"/>
    <property type="match status" value="1"/>
</dbReference>
<dbReference type="SUPFAM" id="SSF55307">
    <property type="entry name" value="Tubulin C-terminal domain-like"/>
    <property type="match status" value="1"/>
</dbReference>
<dbReference type="SUPFAM" id="SSF52490">
    <property type="entry name" value="Tubulin nucleotide-binding domain-like"/>
    <property type="match status" value="1"/>
</dbReference>
<dbReference type="PROSITE" id="PS01134">
    <property type="entry name" value="FTSZ_1"/>
    <property type="match status" value="1"/>
</dbReference>
<dbReference type="PROSITE" id="PS01135">
    <property type="entry name" value="FTSZ_2"/>
    <property type="match status" value="1"/>
</dbReference>
<proteinExistence type="inferred from homology"/>
<reference key="1">
    <citation type="journal article" date="2001" name="J. Bacteriol.">
        <title>Genome size determination and coding capacity of Sodalis glossinidius, an enteric symbiont of tsetse flies, as revealed by hybridization to Escherichia coli gene arrays.</title>
        <authorList>
            <person name="Akman L."/>
            <person name="Rio R.V.M."/>
            <person name="Beard C.B."/>
            <person name="Aksoy S."/>
        </authorList>
    </citation>
    <scope>NUCLEOTIDE SEQUENCE [GENOMIC DNA]</scope>
</reference>